<protein>
    <recommendedName>
        <fullName>Vacuolar protein sorting-associated protein 29</fullName>
    </recommendedName>
    <alternativeName>
        <fullName>Vesicle protein sorting 29</fullName>
    </alternativeName>
</protein>
<feature type="chain" id="PRO_0000339650" description="Vacuolar protein sorting-associated protein 29">
    <location>
        <begin position="1"/>
        <end position="186"/>
    </location>
</feature>
<accession>Q5ZIL2</accession>
<keyword id="KW-0963">Cytoplasm</keyword>
<keyword id="KW-0967">Endosome</keyword>
<keyword id="KW-0472">Membrane</keyword>
<keyword id="KW-0479">Metal-binding</keyword>
<keyword id="KW-0653">Protein transport</keyword>
<keyword id="KW-1185">Reference proteome</keyword>
<keyword id="KW-0813">Transport</keyword>
<keyword id="KW-0862">Zinc</keyword>
<sequence>MAGHRLVLVLGDLHIPHRCNSLPAKFKKLLVPGKIQHILCTGNLCTKDTYDYLKTLAGDVHVVRGDFDENLNYPEQKVVTVGQFKIGLIHGHQVIPWGDMASLALLQRQFDVDILISGHTHKFEAFEHENKFYINPGSATGAYHALENNIIPSFVLMDIQASTVVTYVYQLIGDDVKVERIEYKKS</sequence>
<reference key="1">
    <citation type="journal article" date="2005" name="Genome Biol.">
        <title>Full-length cDNAs from chicken bursal lymphocytes to facilitate gene function analysis.</title>
        <authorList>
            <person name="Caldwell R.B."/>
            <person name="Kierzek A.M."/>
            <person name="Arakawa H."/>
            <person name="Bezzubov Y."/>
            <person name="Zaim J."/>
            <person name="Fiedler P."/>
            <person name="Kutter S."/>
            <person name="Blagodatski A."/>
            <person name="Kostovska D."/>
            <person name="Koter M."/>
            <person name="Plachy J."/>
            <person name="Carninci P."/>
            <person name="Hayashizaki Y."/>
            <person name="Buerstedde J.-M."/>
        </authorList>
    </citation>
    <scope>NUCLEOTIDE SEQUENCE [LARGE SCALE MRNA]</scope>
    <source>
        <strain>CB</strain>
        <tissue>Bursa of Fabricius</tissue>
    </source>
</reference>
<organism>
    <name type="scientific">Gallus gallus</name>
    <name type="common">Chicken</name>
    <dbReference type="NCBI Taxonomy" id="9031"/>
    <lineage>
        <taxon>Eukaryota</taxon>
        <taxon>Metazoa</taxon>
        <taxon>Chordata</taxon>
        <taxon>Craniata</taxon>
        <taxon>Vertebrata</taxon>
        <taxon>Euteleostomi</taxon>
        <taxon>Archelosauria</taxon>
        <taxon>Archosauria</taxon>
        <taxon>Dinosauria</taxon>
        <taxon>Saurischia</taxon>
        <taxon>Theropoda</taxon>
        <taxon>Coelurosauria</taxon>
        <taxon>Aves</taxon>
        <taxon>Neognathae</taxon>
        <taxon>Galloanserae</taxon>
        <taxon>Galliformes</taxon>
        <taxon>Phasianidae</taxon>
        <taxon>Phasianinae</taxon>
        <taxon>Gallus</taxon>
    </lineage>
</organism>
<comment type="function">
    <text evidence="2">Component of the commander complex that is essential for endosomal recycling of transmembrane cargos; the commander complex is composed of the CCC subcomplex and the retriever subcomplex (By similarity). Component of the retriever complex, which is a heterotrimeric complex related to retromer cargo-selective complex (CSC) and essential for retromer-independent retrieval and recycling of numerous cargos such as integrin alpha-5/beta-1 (ITGA5:ITGB1) (By similarity). Component of the retromer cargo-selective complex (CSC). The CSC is believed to be the core functional component of retromer or respective retromer complex variants acting to prevent missorting of selected transmembrane cargo proteins into the lysosomal degradation pathway. The recruitment of the CSC to the endosomal membrane involves RAB7A and SNX3. The SNX-BAR retromer mediates retrograde transport of cargo proteins from endosomes to the trans-Golgi network (TGN) and is involved in endosome-to-plasma membrane transport for cargo protein recycling. The SNX3-retromer mediates the retrograde endosome-to-TGN transport of WLS distinct from the SNX-BAR retromer pathway. The SNX27-retromer is believed to be involved in endosome-to-plasma membrane trafficking and recycling of a broad spectrum of cargo proteins. The CSC seems to act as recruitment hub for other proteins, such as the WASH complex and TBC1D5. Required to regulate transcytosis of the polymeric immunoglobulin receptor (pIgR-pIgA). In the endosomes, retriever complex drives the retrieval and recycling of NxxY-motif-containing cargo proteins by coupling to SNX17, a cargo essential for the homeostatic maintenance of numerous cell surface proteins associated with processes that include cell migration, cell adhesion, nutrient supply and cell signaling (By similarity). The recruitment of the retriever complex to the endosomal membrane involves CCC and WASH complexes (By similarity). Involved in GLUT1 endosome-to-plasma membrane trafficking; the function is dependent of association with ANKRD27 (By similarity).</text>
</comment>
<comment type="subunit">
    <text evidence="2">Component of the commander complex consisting of the CCC subcomplex and the retriever subcomplex (By similarity). Component of the heterotrimeric retriever complex formed by VPS26C, VPS29 and VPS35L; within the complex interacts with VPS35L (By similarity). Component of the heterotrimeric retromer cargo-selective complex (CSC), also described as vacuolar protein sorting subcomplex (VPS), formed by VPS26 (VPS26A or VPS26B), VPS29 and VPS35 (By similarity). The CSC has a highly elongated structure with VPS26 and VPS29 binding independently at opposite distal ends of VPS35 as central platform (By similarity). The CSC is believed to associate with variable sorting nexins to form functionally distinct retromer complex variants. The originally described retromer complex (also called SNX-BAR retromer) is a pentamer containing the CSC and a heterodimeric membrane-deforming subcomplex formed between SNX1 or SNX2 and SNX5 or SNX6 (also called SNX-BAR subcomplex); the respective CSC and SNX-BAR subcomplexes associate with low affinity. The CSC associates with SNX3 to form a SNX3-retromer complex. The CSC associates with SNX27, the WASH complex and the SNX-BAR subcomplex to form the SNX27-retromer complex (By similarity). Interacts with VPS26A, VPS35, SNX1, SNX2, SNX3, SNX27, WASHC5 (By similarity). Interacts with TBC1D5; this interaction is blocked by VPS35L in the retriever complex (By similarity). Interacts with SNX17; the interaction is indirect; SNX17 (via its C-terminus) interacts with the retriever complex (via VPS26C and VPS35L) (By similarity). Interacts with VPS26B and ANKRD27 (By similarity).</text>
</comment>
<comment type="subcellular location">
    <subcellularLocation>
        <location>Cytoplasm</location>
    </subcellularLocation>
    <subcellularLocation>
        <location>Membrane</location>
        <topology>Peripheral membrane protein</topology>
    </subcellularLocation>
    <subcellularLocation>
        <location evidence="1">Endosome membrane</location>
        <topology evidence="1">Peripheral membrane protein</topology>
    </subcellularLocation>
</comment>
<comment type="similarity">
    <text evidence="3">Belongs to the VPS29 family.</text>
</comment>
<proteinExistence type="evidence at transcript level"/>
<gene>
    <name type="primary">VPS29</name>
    <name type="ORF">RCJMB04_25e21</name>
</gene>
<name>VPS29_CHICK</name>
<dbReference type="EMBL" id="AJ720772">
    <property type="protein sequence ID" value="CAG32431.1"/>
    <property type="molecule type" value="mRNA"/>
</dbReference>
<dbReference type="RefSeq" id="NP_001007838.1">
    <property type="nucleotide sequence ID" value="NM_001007837.3"/>
</dbReference>
<dbReference type="SMR" id="Q5ZIL2"/>
<dbReference type="FunCoup" id="Q5ZIL2">
    <property type="interactions" value="3113"/>
</dbReference>
<dbReference type="STRING" id="9031.ENSGALP00000038322"/>
<dbReference type="PaxDb" id="9031-ENSGALP00000038322"/>
<dbReference type="GeneID" id="416867"/>
<dbReference type="KEGG" id="gga:416867"/>
<dbReference type="CTD" id="51699"/>
<dbReference type="VEuPathDB" id="HostDB:geneid_416867"/>
<dbReference type="eggNOG" id="KOG3325">
    <property type="taxonomic scope" value="Eukaryota"/>
</dbReference>
<dbReference type="InParanoid" id="Q5ZIL2"/>
<dbReference type="OrthoDB" id="10258130at2759"/>
<dbReference type="PhylomeDB" id="Q5ZIL2"/>
<dbReference type="PRO" id="PR:Q5ZIL2"/>
<dbReference type="Proteomes" id="UP000000539">
    <property type="component" value="Unassembled WGS sequence"/>
</dbReference>
<dbReference type="GO" id="GO:0005829">
    <property type="term" value="C:cytosol"/>
    <property type="evidence" value="ECO:0007669"/>
    <property type="project" value="GOC"/>
</dbReference>
<dbReference type="GO" id="GO:0005768">
    <property type="term" value="C:endosome"/>
    <property type="evidence" value="ECO:0000318"/>
    <property type="project" value="GO_Central"/>
</dbReference>
<dbReference type="GO" id="GO:0010008">
    <property type="term" value="C:endosome membrane"/>
    <property type="evidence" value="ECO:0007669"/>
    <property type="project" value="UniProtKB-SubCell"/>
</dbReference>
<dbReference type="GO" id="GO:0030904">
    <property type="term" value="C:retromer complex"/>
    <property type="evidence" value="ECO:0000250"/>
    <property type="project" value="UniProtKB"/>
</dbReference>
<dbReference type="GO" id="GO:0046872">
    <property type="term" value="F:metal ion binding"/>
    <property type="evidence" value="ECO:0007669"/>
    <property type="project" value="UniProtKB-KW"/>
</dbReference>
<dbReference type="GO" id="GO:0032456">
    <property type="term" value="P:endocytic recycling"/>
    <property type="evidence" value="ECO:0000250"/>
    <property type="project" value="UniProtKB"/>
</dbReference>
<dbReference type="GO" id="GO:0006886">
    <property type="term" value="P:intracellular protein transport"/>
    <property type="evidence" value="ECO:0000318"/>
    <property type="project" value="GO_Central"/>
</dbReference>
<dbReference type="GO" id="GO:0042147">
    <property type="term" value="P:retrograde transport, endosome to Golgi"/>
    <property type="evidence" value="ECO:0000318"/>
    <property type="project" value="GO_Central"/>
</dbReference>
<dbReference type="CDD" id="cd07394">
    <property type="entry name" value="MPP_Vps29"/>
    <property type="match status" value="1"/>
</dbReference>
<dbReference type="FunFam" id="3.60.21.10:FF:000009">
    <property type="entry name" value="Vacuolar protein sorting-associated protein 29"/>
    <property type="match status" value="1"/>
</dbReference>
<dbReference type="Gene3D" id="3.60.21.10">
    <property type="match status" value="1"/>
</dbReference>
<dbReference type="InterPro" id="IPR024654">
    <property type="entry name" value="Calcineurin-like_PHP_lpxH"/>
</dbReference>
<dbReference type="InterPro" id="IPR029052">
    <property type="entry name" value="Metallo-depent_PP-like"/>
</dbReference>
<dbReference type="InterPro" id="IPR000979">
    <property type="entry name" value="Phosphodiesterase_MJ0936/Vps29"/>
</dbReference>
<dbReference type="InterPro" id="IPR028661">
    <property type="entry name" value="Vps29"/>
</dbReference>
<dbReference type="NCBIfam" id="TIGR00040">
    <property type="entry name" value="yfcE"/>
    <property type="match status" value="1"/>
</dbReference>
<dbReference type="PANTHER" id="PTHR11124">
    <property type="entry name" value="VACUOLAR SORTING PROTEIN VPS29"/>
    <property type="match status" value="1"/>
</dbReference>
<dbReference type="Pfam" id="PF12850">
    <property type="entry name" value="Metallophos_2"/>
    <property type="match status" value="1"/>
</dbReference>
<dbReference type="SUPFAM" id="SSF56300">
    <property type="entry name" value="Metallo-dependent phosphatases"/>
    <property type="match status" value="1"/>
</dbReference>
<evidence type="ECO:0000250" key="1">
    <source>
        <dbReference type="UniProtKB" id="Q9QZ88"/>
    </source>
</evidence>
<evidence type="ECO:0000250" key="2">
    <source>
        <dbReference type="UniProtKB" id="Q9UBQ0"/>
    </source>
</evidence>
<evidence type="ECO:0000305" key="3"/>